<evidence type="ECO:0000255" key="1">
    <source>
        <dbReference type="HAMAP-Rule" id="MF_00457"/>
    </source>
</evidence>
<proteinExistence type="inferred from homology"/>
<sequence length="291" mass="30540">MIRRRLIIAAAAATALAACASGISNAPAPAPQPATTGSHAPGKTEVLWLGQAATRITTPGGKVIVIDPWLTGNPKTPPAFKQLSALGKVDMILLTHAHGDHLGDAPAIATTQHVPIWNGGGMGPQLVSLGLVTSDLVQPFGKSGTVMPFGPNGPKITAVHAEHSSELVWKNPATNKNESHYGGEPVGYIIEMENGFKIWHMGDTGLFSDMKLIAERYKPDLAMIPIGGHYTMGPQDAAIAVRDFIKPRYAIPMHYGTSPMLRGTPDEFKAALGAGATTAVIVPDPGQQVAF</sequence>
<protein>
    <recommendedName>
        <fullName evidence="1">UPF0173 metal-dependent hydrolase Rmet_5695</fullName>
    </recommendedName>
</protein>
<feature type="chain" id="PRO_0000367201" description="UPF0173 metal-dependent hydrolase Rmet_5695">
    <location>
        <begin position="1"/>
        <end position="291"/>
    </location>
</feature>
<keyword id="KW-0378">Hydrolase</keyword>
<keyword id="KW-0614">Plasmid</keyword>
<keyword id="KW-1185">Reference proteome</keyword>
<name>Y5695_CUPMC</name>
<gene>
    <name type="ordered locus">Rmet_5695</name>
</gene>
<reference key="1">
    <citation type="journal article" date="2010" name="PLoS ONE">
        <title>The complete genome sequence of Cupriavidus metallidurans strain CH34, a master survivalist in harsh and anthropogenic environments.</title>
        <authorList>
            <person name="Janssen P.J."/>
            <person name="Van Houdt R."/>
            <person name="Moors H."/>
            <person name="Monsieurs P."/>
            <person name="Morin N."/>
            <person name="Michaux A."/>
            <person name="Benotmane M.A."/>
            <person name="Leys N."/>
            <person name="Vallaeys T."/>
            <person name="Lapidus A."/>
            <person name="Monchy S."/>
            <person name="Medigue C."/>
            <person name="Taghavi S."/>
            <person name="McCorkle S."/>
            <person name="Dunn J."/>
            <person name="van der Lelie D."/>
            <person name="Mergeay M."/>
        </authorList>
    </citation>
    <scope>NUCLEOTIDE SEQUENCE [LARGE SCALE GENOMIC DNA]</scope>
    <source>
        <strain>ATCC 43123 / DSM 2839 / NBRC 102507 / CH34</strain>
    </source>
</reference>
<accession>Q1LBC2</accession>
<geneLocation type="plasmid">
    <name>megaplasmid CH34</name>
</geneLocation>
<dbReference type="EMBL" id="CP000353">
    <property type="protein sequence ID" value="ABF12554.1"/>
    <property type="molecule type" value="Genomic_DNA"/>
</dbReference>
<dbReference type="RefSeq" id="WP_011520096.1">
    <property type="nucleotide sequence ID" value="NC_007974.2"/>
</dbReference>
<dbReference type="SMR" id="Q1LBC2"/>
<dbReference type="KEGG" id="rme:Rmet_5695"/>
<dbReference type="eggNOG" id="COG2220">
    <property type="taxonomic scope" value="Bacteria"/>
</dbReference>
<dbReference type="HOGENOM" id="CLU_070010_4_0_4"/>
<dbReference type="Proteomes" id="UP000002429">
    <property type="component" value="Plasmid megaplasmid CH34"/>
</dbReference>
<dbReference type="GO" id="GO:0016787">
    <property type="term" value="F:hydrolase activity"/>
    <property type="evidence" value="ECO:0007669"/>
    <property type="project" value="UniProtKB-UniRule"/>
</dbReference>
<dbReference type="Gene3D" id="3.60.15.10">
    <property type="entry name" value="Ribonuclease Z/Hydroxyacylglutathione hydrolase-like"/>
    <property type="match status" value="1"/>
</dbReference>
<dbReference type="HAMAP" id="MF_00457">
    <property type="entry name" value="UPF0173"/>
    <property type="match status" value="1"/>
</dbReference>
<dbReference type="InterPro" id="IPR001279">
    <property type="entry name" value="Metallo-B-lactamas"/>
</dbReference>
<dbReference type="InterPro" id="IPR036866">
    <property type="entry name" value="RibonucZ/Hydroxyglut_hydro"/>
</dbReference>
<dbReference type="InterPro" id="IPR006311">
    <property type="entry name" value="TAT_signal"/>
</dbReference>
<dbReference type="InterPro" id="IPR022877">
    <property type="entry name" value="UPF0173"/>
</dbReference>
<dbReference type="InterPro" id="IPR050114">
    <property type="entry name" value="UPF0173_UPF0282_UlaG_hydrolase"/>
</dbReference>
<dbReference type="NCBIfam" id="NF001911">
    <property type="entry name" value="PRK00685.1"/>
    <property type="match status" value="1"/>
</dbReference>
<dbReference type="PANTHER" id="PTHR43546:SF3">
    <property type="entry name" value="UPF0173 METAL-DEPENDENT HYDROLASE MJ1163"/>
    <property type="match status" value="1"/>
</dbReference>
<dbReference type="PANTHER" id="PTHR43546">
    <property type="entry name" value="UPF0173 METAL-DEPENDENT HYDROLASE MJ1163-RELATED"/>
    <property type="match status" value="1"/>
</dbReference>
<dbReference type="Pfam" id="PF12706">
    <property type="entry name" value="Lactamase_B_2"/>
    <property type="match status" value="1"/>
</dbReference>
<dbReference type="SMART" id="SM00849">
    <property type="entry name" value="Lactamase_B"/>
    <property type="match status" value="1"/>
</dbReference>
<dbReference type="SUPFAM" id="SSF56281">
    <property type="entry name" value="Metallo-hydrolase/oxidoreductase"/>
    <property type="match status" value="1"/>
</dbReference>
<organism>
    <name type="scientific">Cupriavidus metallidurans (strain ATCC 43123 / DSM 2839 / NBRC 102507 / CH34)</name>
    <name type="common">Ralstonia metallidurans</name>
    <dbReference type="NCBI Taxonomy" id="266264"/>
    <lineage>
        <taxon>Bacteria</taxon>
        <taxon>Pseudomonadati</taxon>
        <taxon>Pseudomonadota</taxon>
        <taxon>Betaproteobacteria</taxon>
        <taxon>Burkholderiales</taxon>
        <taxon>Burkholderiaceae</taxon>
        <taxon>Cupriavidus</taxon>
    </lineage>
</organism>
<comment type="similarity">
    <text evidence="1">Belongs to the UPF0173 family.</text>
</comment>